<keyword id="KW-0238">DNA-binding</keyword>
<keyword id="KW-0678">Repressor</keyword>
<keyword id="KW-0804">Transcription</keyword>
<keyword id="KW-0805">Transcription regulation</keyword>
<comment type="function">
    <text evidence="2">Involved in the repression of the cym and cmt operons which are responsible of the p-cymene degradation.</text>
</comment>
<comment type="induction">
    <text evidence="2">Induced by p-cumate.</text>
</comment>
<sequence length="203" mass="23323">MSPKRRTQAERAMETQGKLIAAALGVLREKGYAGFRIADVPGAAGVSRGAQSHHFPTKLELLLATFEWLYEQITERSRARLAKLKPEDDVIQQMLDDAAEFFLDDDFSISLDLIVAADRDPALREGIQRTVERNRFVVEDMWLGVLVSRGLSRDDAEDILWLIFNSVRGLAVRSLWQKDKERFERVRNSTLEIARERYAKFKR</sequence>
<organism>
    <name type="scientific">Pseudomonas putida</name>
    <name type="common">Arthrobacter siderocapsulatus</name>
    <dbReference type="NCBI Taxonomy" id="303"/>
    <lineage>
        <taxon>Bacteria</taxon>
        <taxon>Pseudomonadati</taxon>
        <taxon>Pseudomonadota</taxon>
        <taxon>Gammaproteobacteria</taxon>
        <taxon>Pseudomonadales</taxon>
        <taxon>Pseudomonadaceae</taxon>
        <taxon>Pseudomonas</taxon>
    </lineage>
</organism>
<evidence type="ECO:0000255" key="1">
    <source>
        <dbReference type="PROSITE-ProRule" id="PRU00335"/>
    </source>
</evidence>
<evidence type="ECO:0000269" key="2">
    <source>
    </source>
</evidence>
<evidence type="ECO:0000303" key="3">
    <source>
    </source>
</evidence>
<evidence type="ECO:0000312" key="4">
    <source>
        <dbReference type="EMBL" id="AAB62296.1"/>
    </source>
</evidence>
<proteinExistence type="evidence at transcript level"/>
<name>CYMR_PSEPU</name>
<reference key="1">
    <citation type="journal article" date="1996" name="J. Bacteriol.">
        <title>p-cumate catabolic pathway in Pseudomonas putida F1: cloning and characterization of DNA carrying the cmt operon.</title>
        <authorList>
            <person name="Eaton R.W."/>
        </authorList>
    </citation>
    <scope>NUCLEOTIDE SEQUENCE [GENOMIC DNA]</scope>
    <source>
        <strain evidence="4">F1</strain>
    </source>
</reference>
<reference key="2">
    <citation type="journal article" date="1997" name="J. Bacteriol.">
        <title>p-Cymene catabolic pathway in Pseudomonas putida F1: cloning and characterization of DNA encoding conversion of p-cymene to p-cumate.</title>
        <authorList>
            <person name="Eaton R.W."/>
        </authorList>
    </citation>
    <scope>NUCLEOTIDE SEQUENCE [GENOMIC DNA]</scope>
    <scope>FUNCTION</scope>
    <scope>INDUCTION</scope>
    <source>
        <strain evidence="4">F1</strain>
    </source>
</reference>
<reference key="3">
    <citation type="journal article" date="2001" name="Microbiology">
        <title>Pseudomonas putida CE2010 can degrade biphenyl by a mosaic pathway encoded by the tod operon and cmtE, which are identical to those of P. putida F1 except for a single base difference in the operator-promoter region of the cmt operon.</title>
        <authorList>
            <person name="Ohta Y."/>
            <person name="Maeda M."/>
            <person name="Kudo T."/>
        </authorList>
    </citation>
    <scope>NUCLEOTIDE SEQUENCE [GENOMIC DNA]</scope>
</reference>
<accession>O33453</accession>
<feature type="chain" id="PRO_0000442285" description="HTH-type transcriptional regulator CymR">
    <location>
        <begin position="1"/>
        <end position="203"/>
    </location>
</feature>
<feature type="domain" description="HTH tetR-type" evidence="1">
    <location>
        <begin position="13"/>
        <end position="73"/>
    </location>
</feature>
<feature type="DNA-binding region" description="H-T-H motif" evidence="1">
    <location>
        <begin position="36"/>
        <end position="55"/>
    </location>
</feature>
<gene>
    <name evidence="3" type="primary">cymR</name>
</gene>
<dbReference type="EMBL" id="U24215">
    <property type="protein sequence ID" value="AAB62296.1"/>
    <property type="molecule type" value="Genomic_DNA"/>
</dbReference>
<dbReference type="EMBL" id="AB042509">
    <property type="protein sequence ID" value="BAB17786.1"/>
    <property type="molecule type" value="Genomic_DNA"/>
</dbReference>
<dbReference type="SMR" id="O33453"/>
<dbReference type="GO" id="GO:0003677">
    <property type="term" value="F:DNA binding"/>
    <property type="evidence" value="ECO:0007669"/>
    <property type="project" value="UniProtKB-KW"/>
</dbReference>
<dbReference type="Gene3D" id="1.10.357.10">
    <property type="entry name" value="Tetracycline Repressor, domain 2"/>
    <property type="match status" value="1"/>
</dbReference>
<dbReference type="InterPro" id="IPR009057">
    <property type="entry name" value="Homeodomain-like_sf"/>
</dbReference>
<dbReference type="InterPro" id="IPR001647">
    <property type="entry name" value="HTH_TetR"/>
</dbReference>
<dbReference type="InterPro" id="IPR036271">
    <property type="entry name" value="Tet_transcr_reg_TetR-rel_C_sf"/>
</dbReference>
<dbReference type="PANTHER" id="PTHR47506:SF1">
    <property type="entry name" value="HTH-TYPE TRANSCRIPTIONAL REGULATOR YJDC"/>
    <property type="match status" value="1"/>
</dbReference>
<dbReference type="PANTHER" id="PTHR47506">
    <property type="entry name" value="TRANSCRIPTIONAL REGULATORY PROTEIN"/>
    <property type="match status" value="1"/>
</dbReference>
<dbReference type="Pfam" id="PF00440">
    <property type="entry name" value="TetR_N"/>
    <property type="match status" value="1"/>
</dbReference>
<dbReference type="PRINTS" id="PR00455">
    <property type="entry name" value="HTHTETR"/>
</dbReference>
<dbReference type="SUPFAM" id="SSF46689">
    <property type="entry name" value="Homeodomain-like"/>
    <property type="match status" value="1"/>
</dbReference>
<dbReference type="SUPFAM" id="SSF48498">
    <property type="entry name" value="Tetracyclin repressor-like, C-terminal domain"/>
    <property type="match status" value="1"/>
</dbReference>
<dbReference type="PROSITE" id="PS50977">
    <property type="entry name" value="HTH_TETR_2"/>
    <property type="match status" value="1"/>
</dbReference>
<protein>
    <recommendedName>
        <fullName evidence="3">HTH-type transcriptional regulator CymR</fullName>
    </recommendedName>
</protein>